<accession>Q3KLF4</accession>
<name>SYH_CHLTA</name>
<sequence>MSNALPKGVFDIFPYVTSPKNLWRNSSLWKRVEHAAHRICNLYGFDEIRTPVFEKTETFLRVGEYSDIVKKEVYTFLDKKRRSLTLRPEGTAAVVRALLDHSADMRKDNKFYYILPMFRYERQQSGRYRQHHQFGLEAIGVRHPLRDAEVLSLLWDFYAAVGLQHMQIHVNFLGGQKTRARYDEALREFFRKDLDRLSPLSQERYHANLLRILDSKEPEDQEFIEKAPSILDYIDDRDLSYFDAVLAQLKALGISFAINPRLVRGLDYYTDLVFEAVTVVGEHSYALGGGGRYDELVAQSGGPSMPAFGFGVGLERVIQTLLEQGNSLSTSTRRLRLIPMDEQADAFCFSWANRLRNLGIATEVDWSHKKPKLSLKDAADQQVSFVCLLGEQELATKQFIVKDMSLHQSFSGAQQDVEQRLVYEVQNA</sequence>
<proteinExistence type="inferred from homology"/>
<dbReference type="EC" id="6.1.1.21" evidence="1"/>
<dbReference type="EMBL" id="CP000051">
    <property type="protein sequence ID" value="AAX50818.1"/>
    <property type="molecule type" value="Genomic_DNA"/>
</dbReference>
<dbReference type="RefSeq" id="WP_009871907.1">
    <property type="nucleotide sequence ID" value="NC_007429.1"/>
</dbReference>
<dbReference type="SMR" id="Q3KLF4"/>
<dbReference type="KEGG" id="cta:CTA_0593"/>
<dbReference type="HOGENOM" id="CLU_025113_1_1_0"/>
<dbReference type="Proteomes" id="UP000002532">
    <property type="component" value="Chromosome"/>
</dbReference>
<dbReference type="GO" id="GO:0005737">
    <property type="term" value="C:cytoplasm"/>
    <property type="evidence" value="ECO:0007669"/>
    <property type="project" value="UniProtKB-SubCell"/>
</dbReference>
<dbReference type="GO" id="GO:0005524">
    <property type="term" value="F:ATP binding"/>
    <property type="evidence" value="ECO:0007669"/>
    <property type="project" value="UniProtKB-UniRule"/>
</dbReference>
<dbReference type="GO" id="GO:0004821">
    <property type="term" value="F:histidine-tRNA ligase activity"/>
    <property type="evidence" value="ECO:0007669"/>
    <property type="project" value="UniProtKB-UniRule"/>
</dbReference>
<dbReference type="GO" id="GO:0006427">
    <property type="term" value="P:histidyl-tRNA aminoacylation"/>
    <property type="evidence" value="ECO:0007669"/>
    <property type="project" value="UniProtKB-UniRule"/>
</dbReference>
<dbReference type="CDD" id="cd00773">
    <property type="entry name" value="HisRS-like_core"/>
    <property type="match status" value="1"/>
</dbReference>
<dbReference type="FunFam" id="3.30.930.10:FF:000166">
    <property type="entry name" value="Histidine--tRNA ligase"/>
    <property type="match status" value="1"/>
</dbReference>
<dbReference type="Gene3D" id="3.40.50.800">
    <property type="entry name" value="Anticodon-binding domain"/>
    <property type="match status" value="1"/>
</dbReference>
<dbReference type="Gene3D" id="3.30.930.10">
    <property type="entry name" value="Bira Bifunctional Protein, Domain 2"/>
    <property type="match status" value="1"/>
</dbReference>
<dbReference type="HAMAP" id="MF_00127">
    <property type="entry name" value="His_tRNA_synth"/>
    <property type="match status" value="1"/>
</dbReference>
<dbReference type="InterPro" id="IPR006195">
    <property type="entry name" value="aa-tRNA-synth_II"/>
</dbReference>
<dbReference type="InterPro" id="IPR045864">
    <property type="entry name" value="aa-tRNA-synth_II/BPL/LPL"/>
</dbReference>
<dbReference type="InterPro" id="IPR004154">
    <property type="entry name" value="Anticodon-bd"/>
</dbReference>
<dbReference type="InterPro" id="IPR036621">
    <property type="entry name" value="Anticodon-bd_dom_sf"/>
</dbReference>
<dbReference type="InterPro" id="IPR015807">
    <property type="entry name" value="His-tRNA-ligase"/>
</dbReference>
<dbReference type="InterPro" id="IPR041715">
    <property type="entry name" value="HisRS-like_core"/>
</dbReference>
<dbReference type="InterPro" id="IPR004516">
    <property type="entry name" value="HisRS/HisZ"/>
</dbReference>
<dbReference type="NCBIfam" id="TIGR00442">
    <property type="entry name" value="hisS"/>
    <property type="match status" value="1"/>
</dbReference>
<dbReference type="PANTHER" id="PTHR43707:SF1">
    <property type="entry name" value="HISTIDINE--TRNA LIGASE, MITOCHONDRIAL-RELATED"/>
    <property type="match status" value="1"/>
</dbReference>
<dbReference type="PANTHER" id="PTHR43707">
    <property type="entry name" value="HISTIDYL-TRNA SYNTHETASE"/>
    <property type="match status" value="1"/>
</dbReference>
<dbReference type="Pfam" id="PF03129">
    <property type="entry name" value="HGTP_anticodon"/>
    <property type="match status" value="1"/>
</dbReference>
<dbReference type="Pfam" id="PF13393">
    <property type="entry name" value="tRNA-synt_His"/>
    <property type="match status" value="1"/>
</dbReference>
<dbReference type="PIRSF" id="PIRSF001549">
    <property type="entry name" value="His-tRNA_synth"/>
    <property type="match status" value="1"/>
</dbReference>
<dbReference type="SUPFAM" id="SSF52954">
    <property type="entry name" value="Class II aaRS ABD-related"/>
    <property type="match status" value="1"/>
</dbReference>
<dbReference type="SUPFAM" id="SSF55681">
    <property type="entry name" value="Class II aaRS and biotin synthetases"/>
    <property type="match status" value="1"/>
</dbReference>
<dbReference type="PROSITE" id="PS50862">
    <property type="entry name" value="AA_TRNA_LIGASE_II"/>
    <property type="match status" value="1"/>
</dbReference>
<comment type="catalytic activity">
    <reaction evidence="1">
        <text>tRNA(His) + L-histidine + ATP = L-histidyl-tRNA(His) + AMP + diphosphate + H(+)</text>
        <dbReference type="Rhea" id="RHEA:17313"/>
        <dbReference type="Rhea" id="RHEA-COMP:9665"/>
        <dbReference type="Rhea" id="RHEA-COMP:9689"/>
        <dbReference type="ChEBI" id="CHEBI:15378"/>
        <dbReference type="ChEBI" id="CHEBI:30616"/>
        <dbReference type="ChEBI" id="CHEBI:33019"/>
        <dbReference type="ChEBI" id="CHEBI:57595"/>
        <dbReference type="ChEBI" id="CHEBI:78442"/>
        <dbReference type="ChEBI" id="CHEBI:78527"/>
        <dbReference type="ChEBI" id="CHEBI:456215"/>
        <dbReference type="EC" id="6.1.1.21"/>
    </reaction>
</comment>
<comment type="subunit">
    <text evidence="1">Homodimer.</text>
</comment>
<comment type="subcellular location">
    <subcellularLocation>
        <location evidence="1">Cytoplasm</location>
    </subcellularLocation>
</comment>
<comment type="similarity">
    <text evidence="1">Belongs to the class-II aminoacyl-tRNA synthetase family.</text>
</comment>
<organism>
    <name type="scientific">Chlamydia trachomatis serovar A (strain ATCC VR-571B / DSM 19440 / HAR-13)</name>
    <dbReference type="NCBI Taxonomy" id="315277"/>
    <lineage>
        <taxon>Bacteria</taxon>
        <taxon>Pseudomonadati</taxon>
        <taxon>Chlamydiota</taxon>
        <taxon>Chlamydiia</taxon>
        <taxon>Chlamydiales</taxon>
        <taxon>Chlamydiaceae</taxon>
        <taxon>Chlamydia/Chlamydophila group</taxon>
        <taxon>Chlamydia</taxon>
    </lineage>
</organism>
<protein>
    <recommendedName>
        <fullName evidence="1">Histidine--tRNA ligase</fullName>
        <ecNumber evidence="1">6.1.1.21</ecNumber>
    </recommendedName>
    <alternativeName>
        <fullName evidence="1">Histidyl-tRNA synthetase</fullName>
        <shortName evidence="1">HisRS</shortName>
    </alternativeName>
</protein>
<keyword id="KW-0030">Aminoacyl-tRNA synthetase</keyword>
<keyword id="KW-0067">ATP-binding</keyword>
<keyword id="KW-0963">Cytoplasm</keyword>
<keyword id="KW-0436">Ligase</keyword>
<keyword id="KW-0547">Nucleotide-binding</keyword>
<keyword id="KW-0648">Protein biosynthesis</keyword>
<gene>
    <name evidence="1" type="primary">hisS</name>
    <name type="ordered locus">CTA_0593</name>
</gene>
<reference key="1">
    <citation type="journal article" date="2005" name="Infect. Immun.">
        <title>Comparative genomic analysis of Chlamydia trachomatis oculotropic and genitotropic strains.</title>
        <authorList>
            <person name="Carlson J.H."/>
            <person name="Porcella S.F."/>
            <person name="McClarty G."/>
            <person name="Caldwell H.D."/>
        </authorList>
    </citation>
    <scope>NUCLEOTIDE SEQUENCE [LARGE SCALE GENOMIC DNA]</scope>
    <source>
        <strain>ATCC VR-571B / DSM 19440 / HAR-13</strain>
    </source>
</reference>
<evidence type="ECO:0000255" key="1">
    <source>
        <dbReference type="HAMAP-Rule" id="MF_00127"/>
    </source>
</evidence>
<feature type="chain" id="PRO_1000016340" description="Histidine--tRNA ligase">
    <location>
        <begin position="1"/>
        <end position="428"/>
    </location>
</feature>